<feature type="chain" id="PRO_0000380273" description="Undecaprenyl-phosphate 4-deoxy-4-formamido-L-arabinose transferase">
    <location>
        <begin position="1"/>
        <end position="322"/>
    </location>
</feature>
<feature type="topological domain" description="Cytoplasmic" evidence="1">
    <location>
        <begin position="1"/>
        <end position="235"/>
    </location>
</feature>
<feature type="transmembrane region" description="Helical" evidence="1">
    <location>
        <begin position="236"/>
        <end position="256"/>
    </location>
</feature>
<feature type="topological domain" description="Periplasmic" evidence="1">
    <location>
        <begin position="257"/>
        <end position="269"/>
    </location>
</feature>
<feature type="transmembrane region" description="Helical" evidence="1">
    <location>
        <begin position="270"/>
        <end position="290"/>
    </location>
</feature>
<feature type="topological domain" description="Cytoplasmic" evidence="1">
    <location>
        <begin position="291"/>
        <end position="322"/>
    </location>
</feature>
<keyword id="KW-0046">Antibiotic resistance</keyword>
<keyword id="KW-0997">Cell inner membrane</keyword>
<keyword id="KW-1003">Cell membrane</keyword>
<keyword id="KW-0328">Glycosyltransferase</keyword>
<keyword id="KW-0441">Lipid A biosynthesis</keyword>
<keyword id="KW-0444">Lipid biosynthesis</keyword>
<keyword id="KW-0443">Lipid metabolism</keyword>
<keyword id="KW-0448">Lipopolysaccharide biosynthesis</keyword>
<keyword id="KW-0472">Membrane</keyword>
<keyword id="KW-1185">Reference proteome</keyword>
<keyword id="KW-0808">Transferase</keyword>
<keyword id="KW-0812">Transmembrane</keyword>
<keyword id="KW-1133">Transmembrane helix</keyword>
<accession>Q32DT4</accession>
<evidence type="ECO:0000255" key="1">
    <source>
        <dbReference type="HAMAP-Rule" id="MF_01164"/>
    </source>
</evidence>
<evidence type="ECO:0000305" key="2"/>
<dbReference type="EC" id="2.4.2.53" evidence="1"/>
<dbReference type="EMBL" id="CP000034">
    <property type="protein sequence ID" value="ABB62521.1"/>
    <property type="status" value="ALT_FRAME"/>
    <property type="molecule type" value="Genomic_DNA"/>
</dbReference>
<dbReference type="SMR" id="Q32DT4"/>
<dbReference type="STRING" id="300267.SDY_2450"/>
<dbReference type="CAZy" id="GT2">
    <property type="family name" value="Glycosyltransferase Family 2"/>
</dbReference>
<dbReference type="EnsemblBacteria" id="ABB62521">
    <property type="protein sequence ID" value="ABB62521"/>
    <property type="gene ID" value="SDY_2450"/>
</dbReference>
<dbReference type="KEGG" id="sdy:SDY_2450"/>
<dbReference type="HOGENOM" id="CLU_033536_0_0_6"/>
<dbReference type="UniPathway" id="UPA00030"/>
<dbReference type="UniPathway" id="UPA00036">
    <property type="reaction ID" value="UER00495"/>
</dbReference>
<dbReference type="Proteomes" id="UP000002716">
    <property type="component" value="Chromosome"/>
</dbReference>
<dbReference type="GO" id="GO:0005886">
    <property type="term" value="C:plasma membrane"/>
    <property type="evidence" value="ECO:0007669"/>
    <property type="project" value="UniProtKB-SubCell"/>
</dbReference>
<dbReference type="GO" id="GO:0016780">
    <property type="term" value="F:phosphotransferase activity, for other substituted phosphate groups"/>
    <property type="evidence" value="ECO:0007669"/>
    <property type="project" value="UniProtKB-UniRule"/>
</dbReference>
<dbReference type="GO" id="GO:0099621">
    <property type="term" value="F:undecaprenyl-phosphate 4-deoxy-4-formamido-L-arabinose transferase activity"/>
    <property type="evidence" value="ECO:0007669"/>
    <property type="project" value="UniProtKB-EC"/>
</dbReference>
<dbReference type="GO" id="GO:0036108">
    <property type="term" value="P:4-amino-4-deoxy-alpha-L-arabinopyranosyl undecaprenyl phosphate biosynthetic process"/>
    <property type="evidence" value="ECO:0007669"/>
    <property type="project" value="UniProtKB-UniRule"/>
</dbReference>
<dbReference type="GO" id="GO:0009245">
    <property type="term" value="P:lipid A biosynthetic process"/>
    <property type="evidence" value="ECO:0007669"/>
    <property type="project" value="UniProtKB-UniRule"/>
</dbReference>
<dbReference type="GO" id="GO:0009103">
    <property type="term" value="P:lipopolysaccharide biosynthetic process"/>
    <property type="evidence" value="ECO:0007669"/>
    <property type="project" value="UniProtKB-UniRule"/>
</dbReference>
<dbReference type="GO" id="GO:0046677">
    <property type="term" value="P:response to antibiotic"/>
    <property type="evidence" value="ECO:0007669"/>
    <property type="project" value="UniProtKB-KW"/>
</dbReference>
<dbReference type="CDD" id="cd04187">
    <property type="entry name" value="DPM1_like_bac"/>
    <property type="match status" value="1"/>
</dbReference>
<dbReference type="FunFam" id="3.90.550.10:FF:000019">
    <property type="entry name" value="Undecaprenyl-phosphate 4-deoxy-4-formamido-L-arabinose transferase"/>
    <property type="match status" value="1"/>
</dbReference>
<dbReference type="Gene3D" id="3.90.550.10">
    <property type="entry name" value="Spore Coat Polysaccharide Biosynthesis Protein SpsA, Chain A"/>
    <property type="match status" value="1"/>
</dbReference>
<dbReference type="HAMAP" id="MF_01164">
    <property type="entry name" value="ArnC_transfer"/>
    <property type="match status" value="1"/>
</dbReference>
<dbReference type="InterPro" id="IPR022857">
    <property type="entry name" value="ArnC_tfrase"/>
</dbReference>
<dbReference type="InterPro" id="IPR001173">
    <property type="entry name" value="Glyco_trans_2-like"/>
</dbReference>
<dbReference type="InterPro" id="IPR050256">
    <property type="entry name" value="Glycosyltransferase_2"/>
</dbReference>
<dbReference type="InterPro" id="IPR029044">
    <property type="entry name" value="Nucleotide-diphossugar_trans"/>
</dbReference>
<dbReference type="NCBIfam" id="NF007986">
    <property type="entry name" value="PRK10714.1"/>
    <property type="match status" value="1"/>
</dbReference>
<dbReference type="PANTHER" id="PTHR48090:SF3">
    <property type="entry name" value="UNDECAPRENYL-PHOSPHATE 4-DEOXY-4-FORMAMIDO-L-ARABINOSE TRANSFERASE"/>
    <property type="match status" value="1"/>
</dbReference>
<dbReference type="PANTHER" id="PTHR48090">
    <property type="entry name" value="UNDECAPRENYL-PHOSPHATE 4-DEOXY-4-FORMAMIDO-L-ARABINOSE TRANSFERASE-RELATED"/>
    <property type="match status" value="1"/>
</dbReference>
<dbReference type="Pfam" id="PF00535">
    <property type="entry name" value="Glycos_transf_2"/>
    <property type="match status" value="1"/>
</dbReference>
<dbReference type="SUPFAM" id="SSF53448">
    <property type="entry name" value="Nucleotide-diphospho-sugar transferases"/>
    <property type="match status" value="1"/>
</dbReference>
<name>ARNC_SHIDS</name>
<protein>
    <recommendedName>
        <fullName evidence="1">Undecaprenyl-phosphate 4-deoxy-4-formamido-L-arabinose transferase</fullName>
        <ecNumber evidence="1">2.4.2.53</ecNumber>
    </recommendedName>
    <alternativeName>
        <fullName evidence="1">Undecaprenyl-phosphate Ara4FN transferase</fullName>
        <shortName evidence="1">Ara4FN transferase</shortName>
    </alternativeName>
</protein>
<reference key="1">
    <citation type="journal article" date="2005" name="Nucleic Acids Res.">
        <title>Genome dynamics and diversity of Shigella species, the etiologic agents of bacillary dysentery.</title>
        <authorList>
            <person name="Yang F."/>
            <person name="Yang J."/>
            <person name="Zhang X."/>
            <person name="Chen L."/>
            <person name="Jiang Y."/>
            <person name="Yan Y."/>
            <person name="Tang X."/>
            <person name="Wang J."/>
            <person name="Xiong Z."/>
            <person name="Dong J."/>
            <person name="Xue Y."/>
            <person name="Zhu Y."/>
            <person name="Xu X."/>
            <person name="Sun L."/>
            <person name="Chen S."/>
            <person name="Nie H."/>
            <person name="Peng J."/>
            <person name="Xu J."/>
            <person name="Wang Y."/>
            <person name="Yuan Z."/>
            <person name="Wen Y."/>
            <person name="Yao Z."/>
            <person name="Shen Y."/>
            <person name="Qiang B."/>
            <person name="Hou Y."/>
            <person name="Yu J."/>
            <person name="Jin Q."/>
        </authorList>
    </citation>
    <scope>NUCLEOTIDE SEQUENCE [LARGE SCALE GENOMIC DNA]</scope>
    <source>
        <strain>Sd197</strain>
    </source>
</reference>
<proteinExistence type="inferred from homology"/>
<sequence length="322" mass="36355">MFEIHPVKKVSVVIPVYNEQESLPELIRRTTTACESLGKEYEILLIDDGSSDNSAHMLVEASQAENSHIVSILLNRNYGQHSAIMAGFSHVTGDLIITLDADLQNPPEEIPRLVAKADEGYDVVGTVRQNRQDSWFRKTASKMINRLIQRTTGKAMGDYGCMLRAYRRHIVDAMLHCHERSTFIPILANIFARRAIEIPVHHAEREYGESKYSFMRLINLMYDLVTCLTTTPLRMLSLLGSIIAIGGFSIAVLLVILRLTFGPQWAAEGVFMLFAVLFTFIGAQFIGMGLLGEYIGRIYTDVRARPRYFVQQVIRPSSKENE</sequence>
<comment type="function">
    <text evidence="1">Catalyzes the transfer of 4-deoxy-4-formamido-L-arabinose from UDP to undecaprenyl phosphate. The modified arabinose is attached to lipid A and is required for resistance to polymyxin and cationic antimicrobial peptides.</text>
</comment>
<comment type="catalytic activity">
    <reaction evidence="1">
        <text>UDP-4-deoxy-4-formamido-beta-L-arabinose + di-trans,octa-cis-undecaprenyl phosphate = 4-deoxy-4-formamido-alpha-L-arabinopyranosyl di-trans,octa-cis-undecaprenyl phosphate + UDP</text>
        <dbReference type="Rhea" id="RHEA:27722"/>
        <dbReference type="ChEBI" id="CHEBI:58223"/>
        <dbReference type="ChEBI" id="CHEBI:58709"/>
        <dbReference type="ChEBI" id="CHEBI:58909"/>
        <dbReference type="ChEBI" id="CHEBI:60392"/>
        <dbReference type="EC" id="2.4.2.53"/>
    </reaction>
</comment>
<comment type="pathway">
    <text evidence="1">Glycolipid biosynthesis; 4-amino-4-deoxy-alpha-L-arabinose undecaprenyl phosphate biosynthesis; 4-amino-4-deoxy-alpha-L-arabinose undecaprenyl phosphate from UDP-4-deoxy-4-formamido-beta-L-arabinose and undecaprenyl phosphate: step 1/2.</text>
</comment>
<comment type="pathway">
    <text evidence="1">Bacterial outer membrane biogenesis; lipopolysaccharide biosynthesis.</text>
</comment>
<comment type="subcellular location">
    <subcellularLocation>
        <location evidence="1">Cell inner membrane</location>
        <topology evidence="1">Multi-pass membrane protein</topology>
    </subcellularLocation>
</comment>
<comment type="similarity">
    <text evidence="1">Belongs to the glycosyltransferase 2 family.</text>
</comment>
<comment type="sequence caution" evidence="2">
    <conflict type="frameshift">
        <sequence resource="EMBL-CDS" id="ABB62521"/>
    </conflict>
</comment>
<organism>
    <name type="scientific">Shigella dysenteriae serotype 1 (strain Sd197)</name>
    <dbReference type="NCBI Taxonomy" id="300267"/>
    <lineage>
        <taxon>Bacteria</taxon>
        <taxon>Pseudomonadati</taxon>
        <taxon>Pseudomonadota</taxon>
        <taxon>Gammaproteobacteria</taxon>
        <taxon>Enterobacterales</taxon>
        <taxon>Enterobacteriaceae</taxon>
        <taxon>Shigella</taxon>
    </lineage>
</organism>
<gene>
    <name evidence="1" type="primary">arnC</name>
    <name type="ordered locus">SDY_2450</name>
</gene>